<gene>
    <name evidence="1" type="primary">pdxT</name>
    <name type="ordered locus">Kole_0803</name>
</gene>
<keyword id="KW-0315">Glutamine amidotransferase</keyword>
<keyword id="KW-0378">Hydrolase</keyword>
<keyword id="KW-0456">Lyase</keyword>
<keyword id="KW-0663">Pyridoxal phosphate</keyword>
<keyword id="KW-1185">Reference proteome</keyword>
<organism>
    <name type="scientific">Kosmotoga olearia (strain ATCC BAA-1733 / DSM 21960 / TBF 19.5.1)</name>
    <dbReference type="NCBI Taxonomy" id="521045"/>
    <lineage>
        <taxon>Bacteria</taxon>
        <taxon>Thermotogati</taxon>
        <taxon>Thermotogota</taxon>
        <taxon>Thermotogae</taxon>
        <taxon>Kosmotogales</taxon>
        <taxon>Kosmotogaceae</taxon>
        <taxon>Kosmotoga</taxon>
    </lineage>
</organism>
<accession>C5CG73</accession>
<name>PDXT_KOSOT</name>
<dbReference type="EC" id="4.3.3.6" evidence="1"/>
<dbReference type="EC" id="3.5.1.2" evidence="1"/>
<dbReference type="EMBL" id="CP001634">
    <property type="protein sequence ID" value="ACR79514.1"/>
    <property type="molecule type" value="Genomic_DNA"/>
</dbReference>
<dbReference type="RefSeq" id="WP_015868176.1">
    <property type="nucleotide sequence ID" value="NC_012785.1"/>
</dbReference>
<dbReference type="SMR" id="C5CG73"/>
<dbReference type="STRING" id="521045.Kole_0803"/>
<dbReference type="KEGG" id="kol:Kole_0803"/>
<dbReference type="eggNOG" id="COG0311">
    <property type="taxonomic scope" value="Bacteria"/>
</dbReference>
<dbReference type="HOGENOM" id="CLU_069674_2_0_0"/>
<dbReference type="OrthoDB" id="9810320at2"/>
<dbReference type="UniPathway" id="UPA00245"/>
<dbReference type="Proteomes" id="UP000002382">
    <property type="component" value="Chromosome"/>
</dbReference>
<dbReference type="GO" id="GO:0005829">
    <property type="term" value="C:cytosol"/>
    <property type="evidence" value="ECO:0007669"/>
    <property type="project" value="TreeGrafter"/>
</dbReference>
<dbReference type="GO" id="GO:1903600">
    <property type="term" value="C:glutaminase complex"/>
    <property type="evidence" value="ECO:0007669"/>
    <property type="project" value="TreeGrafter"/>
</dbReference>
<dbReference type="GO" id="GO:0004359">
    <property type="term" value="F:glutaminase activity"/>
    <property type="evidence" value="ECO:0007669"/>
    <property type="project" value="UniProtKB-UniRule"/>
</dbReference>
<dbReference type="GO" id="GO:0036381">
    <property type="term" value="F:pyridoxal 5'-phosphate synthase (glutamine hydrolysing) activity"/>
    <property type="evidence" value="ECO:0007669"/>
    <property type="project" value="UniProtKB-UniRule"/>
</dbReference>
<dbReference type="GO" id="GO:0006543">
    <property type="term" value="P:glutamine catabolic process"/>
    <property type="evidence" value="ECO:0007669"/>
    <property type="project" value="UniProtKB-UniRule"/>
</dbReference>
<dbReference type="GO" id="GO:0042823">
    <property type="term" value="P:pyridoxal phosphate biosynthetic process"/>
    <property type="evidence" value="ECO:0007669"/>
    <property type="project" value="UniProtKB-UniRule"/>
</dbReference>
<dbReference type="GO" id="GO:0008614">
    <property type="term" value="P:pyridoxine metabolic process"/>
    <property type="evidence" value="ECO:0007669"/>
    <property type="project" value="TreeGrafter"/>
</dbReference>
<dbReference type="CDD" id="cd01749">
    <property type="entry name" value="GATase1_PB"/>
    <property type="match status" value="1"/>
</dbReference>
<dbReference type="FunFam" id="3.40.50.880:FF:000010">
    <property type="entry name" value="uncharacterized protein LOC100176842 isoform X2"/>
    <property type="match status" value="1"/>
</dbReference>
<dbReference type="Gene3D" id="3.40.50.880">
    <property type="match status" value="1"/>
</dbReference>
<dbReference type="HAMAP" id="MF_01615">
    <property type="entry name" value="PdxT"/>
    <property type="match status" value="1"/>
</dbReference>
<dbReference type="InterPro" id="IPR029062">
    <property type="entry name" value="Class_I_gatase-like"/>
</dbReference>
<dbReference type="InterPro" id="IPR002161">
    <property type="entry name" value="PdxT/SNO"/>
</dbReference>
<dbReference type="NCBIfam" id="TIGR03800">
    <property type="entry name" value="PLP_synth_Pdx2"/>
    <property type="match status" value="1"/>
</dbReference>
<dbReference type="PANTHER" id="PTHR31559">
    <property type="entry name" value="PYRIDOXAL 5'-PHOSPHATE SYNTHASE SUBUNIT SNO"/>
    <property type="match status" value="1"/>
</dbReference>
<dbReference type="PANTHER" id="PTHR31559:SF0">
    <property type="entry name" value="PYRIDOXAL 5'-PHOSPHATE SYNTHASE SUBUNIT SNO1-RELATED"/>
    <property type="match status" value="1"/>
</dbReference>
<dbReference type="Pfam" id="PF01174">
    <property type="entry name" value="SNO"/>
    <property type="match status" value="1"/>
</dbReference>
<dbReference type="PIRSF" id="PIRSF005639">
    <property type="entry name" value="Glut_amidoT_SNO"/>
    <property type="match status" value="1"/>
</dbReference>
<dbReference type="SUPFAM" id="SSF52317">
    <property type="entry name" value="Class I glutamine amidotransferase-like"/>
    <property type="match status" value="1"/>
</dbReference>
<dbReference type="PROSITE" id="PS51130">
    <property type="entry name" value="PDXT_SNO_2"/>
    <property type="match status" value="1"/>
</dbReference>
<proteinExistence type="inferred from homology"/>
<reference key="1">
    <citation type="submission" date="2009-06" db="EMBL/GenBank/DDBJ databases">
        <title>Complete sequence of Thermotogales bacterium TBF 19.5.1.</title>
        <authorList>
            <consortium name="US DOE Joint Genome Institute"/>
            <person name="Lucas S."/>
            <person name="Copeland A."/>
            <person name="Lapidus A."/>
            <person name="Glavina del Rio T."/>
            <person name="Tice H."/>
            <person name="Bruce D."/>
            <person name="Goodwin L."/>
            <person name="Pitluck S."/>
            <person name="Chertkov O."/>
            <person name="Brettin T."/>
            <person name="Detter J.C."/>
            <person name="Han C."/>
            <person name="Schmutz J."/>
            <person name="Larimer F."/>
            <person name="Land M."/>
            <person name="Hauser L."/>
            <person name="Kyrpides N."/>
            <person name="Ovchinnikova G."/>
            <person name="Noll K."/>
        </authorList>
    </citation>
    <scope>NUCLEOTIDE SEQUENCE [LARGE SCALE GENOMIC DNA]</scope>
    <source>
        <strain>ATCC BAA-1733 / DSM 21960 / TBF 19.5.1</strain>
    </source>
</reference>
<evidence type="ECO:0000255" key="1">
    <source>
        <dbReference type="HAMAP-Rule" id="MF_01615"/>
    </source>
</evidence>
<protein>
    <recommendedName>
        <fullName evidence="1">Pyridoxal 5'-phosphate synthase subunit PdxT</fullName>
        <ecNumber evidence="1">4.3.3.6</ecNumber>
    </recommendedName>
    <alternativeName>
        <fullName evidence="1">Pdx2</fullName>
    </alternativeName>
    <alternativeName>
        <fullName evidence="1">Pyridoxal 5'-phosphate synthase glutaminase subunit</fullName>
        <ecNumber evidence="1">3.5.1.2</ecNumber>
    </alternativeName>
</protein>
<sequence length="192" mass="21378">MKIGVLGIQGDIQEHLRMIEKTGNEPLWVKSTSELAEVSGLIMPGGESTTMIRLMKKYELWDALREAIASGLPVYATCAGMILLAREIINYPEQETLGVLDIAVERNGYGRQVASFETDLEIPAIGDTPFRAIFIRAPIIEKCGDSVEVLSTYKEKPVLVKQGKILASSFHPELTDDLRIHEYFVKEIIGKE</sequence>
<comment type="function">
    <text evidence="1">Catalyzes the hydrolysis of glutamine to glutamate and ammonia as part of the biosynthesis of pyridoxal 5'-phosphate. The resulting ammonia molecule is channeled to the active site of PdxS.</text>
</comment>
<comment type="catalytic activity">
    <reaction evidence="1">
        <text>aldehydo-D-ribose 5-phosphate + D-glyceraldehyde 3-phosphate + L-glutamine = pyridoxal 5'-phosphate + L-glutamate + phosphate + 3 H2O + H(+)</text>
        <dbReference type="Rhea" id="RHEA:31507"/>
        <dbReference type="ChEBI" id="CHEBI:15377"/>
        <dbReference type="ChEBI" id="CHEBI:15378"/>
        <dbReference type="ChEBI" id="CHEBI:29985"/>
        <dbReference type="ChEBI" id="CHEBI:43474"/>
        <dbReference type="ChEBI" id="CHEBI:58273"/>
        <dbReference type="ChEBI" id="CHEBI:58359"/>
        <dbReference type="ChEBI" id="CHEBI:59776"/>
        <dbReference type="ChEBI" id="CHEBI:597326"/>
        <dbReference type="EC" id="4.3.3.6"/>
    </reaction>
</comment>
<comment type="catalytic activity">
    <reaction evidence="1">
        <text>L-glutamine + H2O = L-glutamate + NH4(+)</text>
        <dbReference type="Rhea" id="RHEA:15889"/>
        <dbReference type="ChEBI" id="CHEBI:15377"/>
        <dbReference type="ChEBI" id="CHEBI:28938"/>
        <dbReference type="ChEBI" id="CHEBI:29985"/>
        <dbReference type="ChEBI" id="CHEBI:58359"/>
        <dbReference type="EC" id="3.5.1.2"/>
    </reaction>
</comment>
<comment type="pathway">
    <text evidence="1">Cofactor biosynthesis; pyridoxal 5'-phosphate biosynthesis.</text>
</comment>
<comment type="subunit">
    <text evidence="1">In the presence of PdxS, forms a dodecamer of heterodimers. Only shows activity in the heterodimer.</text>
</comment>
<comment type="similarity">
    <text evidence="1">Belongs to the glutaminase PdxT/SNO family.</text>
</comment>
<feature type="chain" id="PRO_1000215716" description="Pyridoxal 5'-phosphate synthase subunit PdxT">
    <location>
        <begin position="1"/>
        <end position="192"/>
    </location>
</feature>
<feature type="active site" description="Nucleophile" evidence="1">
    <location>
        <position position="78"/>
    </location>
</feature>
<feature type="active site" description="Charge relay system" evidence="1">
    <location>
        <position position="171"/>
    </location>
</feature>
<feature type="active site" description="Charge relay system" evidence="1">
    <location>
        <position position="173"/>
    </location>
</feature>
<feature type="binding site" evidence="1">
    <location>
        <begin position="46"/>
        <end position="48"/>
    </location>
    <ligand>
        <name>L-glutamine</name>
        <dbReference type="ChEBI" id="CHEBI:58359"/>
    </ligand>
</feature>
<feature type="binding site" evidence="1">
    <location>
        <position position="106"/>
    </location>
    <ligand>
        <name>L-glutamine</name>
        <dbReference type="ChEBI" id="CHEBI:58359"/>
    </ligand>
</feature>
<feature type="binding site" evidence="1">
    <location>
        <begin position="135"/>
        <end position="136"/>
    </location>
    <ligand>
        <name>L-glutamine</name>
        <dbReference type="ChEBI" id="CHEBI:58359"/>
    </ligand>
</feature>